<dbReference type="EC" id="6.3.5.2"/>
<dbReference type="EMBL" id="AE004437">
    <property type="protein sequence ID" value="AAG20037.1"/>
    <property type="molecule type" value="Genomic_DNA"/>
</dbReference>
<dbReference type="PIR" id="A84334">
    <property type="entry name" value="A84334"/>
</dbReference>
<dbReference type="SMR" id="Q9HP33"/>
<dbReference type="FunCoup" id="Q9HP33">
    <property type="interactions" value="177"/>
</dbReference>
<dbReference type="STRING" id="64091.VNG_1829G"/>
<dbReference type="PaxDb" id="64091-VNG_1829G"/>
<dbReference type="KEGG" id="hal:VNG_1829G"/>
<dbReference type="PATRIC" id="fig|64091.14.peg.1394"/>
<dbReference type="HOGENOM" id="CLU_014340_0_0_2"/>
<dbReference type="InParanoid" id="Q9HP33"/>
<dbReference type="OrthoDB" id="33844at2157"/>
<dbReference type="PhylomeDB" id="Q9HP33"/>
<dbReference type="UniPathway" id="UPA00189">
    <property type="reaction ID" value="UER00296"/>
</dbReference>
<dbReference type="Proteomes" id="UP000000554">
    <property type="component" value="Chromosome"/>
</dbReference>
<dbReference type="GO" id="GO:0005829">
    <property type="term" value="C:cytosol"/>
    <property type="evidence" value="ECO:0000318"/>
    <property type="project" value="GO_Central"/>
</dbReference>
<dbReference type="GO" id="GO:0005524">
    <property type="term" value="F:ATP binding"/>
    <property type="evidence" value="ECO:0007669"/>
    <property type="project" value="UniProtKB-UniRule"/>
</dbReference>
<dbReference type="GO" id="GO:0003921">
    <property type="term" value="F:GMP synthase activity"/>
    <property type="evidence" value="ECO:0000318"/>
    <property type="project" value="GO_Central"/>
</dbReference>
<dbReference type="GO" id="GO:0006177">
    <property type="term" value="P:GMP biosynthetic process"/>
    <property type="evidence" value="ECO:0000318"/>
    <property type="project" value="GO_Central"/>
</dbReference>
<dbReference type="CDD" id="cd01997">
    <property type="entry name" value="GMP_synthase_C"/>
    <property type="match status" value="1"/>
</dbReference>
<dbReference type="FunFam" id="3.40.50.620:FF:000208">
    <property type="entry name" value="GMP synthase [glutamine-hydrolyzing] subunit B"/>
    <property type="match status" value="1"/>
</dbReference>
<dbReference type="Gene3D" id="3.30.300.10">
    <property type="match status" value="1"/>
</dbReference>
<dbReference type="Gene3D" id="3.40.50.620">
    <property type="entry name" value="HUPs"/>
    <property type="match status" value="1"/>
</dbReference>
<dbReference type="HAMAP" id="MF_00345">
    <property type="entry name" value="GMP_synthase_B"/>
    <property type="match status" value="1"/>
</dbReference>
<dbReference type="InterPro" id="IPR001674">
    <property type="entry name" value="GMP_synth_C"/>
</dbReference>
<dbReference type="InterPro" id="IPR026598">
    <property type="entry name" value="GMP_synthase_B"/>
</dbReference>
<dbReference type="InterPro" id="IPR025777">
    <property type="entry name" value="GMPS_ATP_PPase_dom"/>
</dbReference>
<dbReference type="InterPro" id="IPR014729">
    <property type="entry name" value="Rossmann-like_a/b/a_fold"/>
</dbReference>
<dbReference type="NCBIfam" id="TIGR00884">
    <property type="entry name" value="guaA_Cterm"/>
    <property type="match status" value="1"/>
</dbReference>
<dbReference type="PANTHER" id="PTHR11922:SF2">
    <property type="entry name" value="GMP SYNTHASE [GLUTAMINE-HYDROLYZING]"/>
    <property type="match status" value="1"/>
</dbReference>
<dbReference type="PANTHER" id="PTHR11922">
    <property type="entry name" value="GMP SYNTHASE-RELATED"/>
    <property type="match status" value="1"/>
</dbReference>
<dbReference type="Pfam" id="PF00958">
    <property type="entry name" value="GMP_synt_C"/>
    <property type="match status" value="1"/>
</dbReference>
<dbReference type="SUPFAM" id="SSF52402">
    <property type="entry name" value="Adenine nucleotide alpha hydrolases-like"/>
    <property type="match status" value="1"/>
</dbReference>
<dbReference type="SUPFAM" id="SSF54810">
    <property type="entry name" value="GMP synthetase C-terminal dimerisation domain"/>
    <property type="match status" value="1"/>
</dbReference>
<dbReference type="PROSITE" id="PS51553">
    <property type="entry name" value="GMPS_ATP_PPASE"/>
    <property type="match status" value="1"/>
</dbReference>
<accession>Q9HP33</accession>
<protein>
    <recommendedName>
        <fullName>GMP synthase [glutamine-hydrolyzing] subunit B</fullName>
        <ecNumber>6.3.5.2</ecNumber>
    </recommendedName>
    <alternativeName>
        <fullName>GMP synthetase</fullName>
    </alternativeName>
</protein>
<name>GUAAB_HALSA</name>
<feature type="chain" id="PRO_0000140239" description="GMP synthase [glutamine-hydrolyzing] subunit B">
    <location>
        <begin position="1"/>
        <end position="305"/>
    </location>
</feature>
<feature type="domain" description="GMPS ATP-PPase">
    <location>
        <begin position="2"/>
        <end position="185"/>
    </location>
</feature>
<feature type="binding site" evidence="1">
    <location>
        <begin position="29"/>
        <end position="35"/>
    </location>
    <ligand>
        <name>ATP</name>
        <dbReference type="ChEBI" id="CHEBI:30616"/>
    </ligand>
</feature>
<comment type="function">
    <text evidence="1">Catalyzes the synthesis of GMP from XMP.</text>
</comment>
<comment type="catalytic activity">
    <reaction>
        <text>XMP + L-glutamine + ATP + H2O = GMP + L-glutamate + AMP + diphosphate + 2 H(+)</text>
        <dbReference type="Rhea" id="RHEA:11680"/>
        <dbReference type="ChEBI" id="CHEBI:15377"/>
        <dbReference type="ChEBI" id="CHEBI:15378"/>
        <dbReference type="ChEBI" id="CHEBI:29985"/>
        <dbReference type="ChEBI" id="CHEBI:30616"/>
        <dbReference type="ChEBI" id="CHEBI:33019"/>
        <dbReference type="ChEBI" id="CHEBI:57464"/>
        <dbReference type="ChEBI" id="CHEBI:58115"/>
        <dbReference type="ChEBI" id="CHEBI:58359"/>
        <dbReference type="ChEBI" id="CHEBI:456215"/>
        <dbReference type="EC" id="6.3.5.2"/>
    </reaction>
</comment>
<comment type="pathway">
    <text>Purine metabolism; GMP biosynthesis; GMP from XMP (L-Gln route): step 1/1.</text>
</comment>
<comment type="subunit">
    <text evidence="2">Heterodimer composed of a glutamine amidotransferase subunit (A) and a GMP-binding subunit (B).</text>
</comment>
<keyword id="KW-0067">ATP-binding</keyword>
<keyword id="KW-0332">GMP biosynthesis</keyword>
<keyword id="KW-0436">Ligase</keyword>
<keyword id="KW-0547">Nucleotide-binding</keyword>
<keyword id="KW-0658">Purine biosynthesis</keyword>
<keyword id="KW-1185">Reference proteome</keyword>
<sequence>MVDVDSFVEDARAEISEALGDETAIIALSGGVDSSTAAALAYEAVGDQLVPVYVDTGLMRKGETDEIREVFDYMDSLRVVDASDRFFDELAGVTDPEEKRHAIGEQFIREFETVAEEVDATQLVQGTIYPDRIESEGTIKSHHNVGGLPERVGFEGIVEPMRDLYKDEVREVARHLGLEEIISERMPFPGPGLAVRVIGEVTPEKVAVCREATHIVEDELEAYEPWQAFAAVLGRATGVKGDNRVHGHVVAVRSVESRDGMTARAQELEWETLQRLQSRIAGTIDEVSRVVYDVTHKPPATIEYE</sequence>
<evidence type="ECO:0000250" key="1"/>
<evidence type="ECO:0000305" key="2"/>
<organism>
    <name type="scientific">Halobacterium salinarum (strain ATCC 700922 / JCM 11081 / NRC-1)</name>
    <name type="common">Halobacterium halobium</name>
    <dbReference type="NCBI Taxonomy" id="64091"/>
    <lineage>
        <taxon>Archaea</taxon>
        <taxon>Methanobacteriati</taxon>
        <taxon>Methanobacteriota</taxon>
        <taxon>Stenosarchaea group</taxon>
        <taxon>Halobacteria</taxon>
        <taxon>Halobacteriales</taxon>
        <taxon>Halobacteriaceae</taxon>
        <taxon>Halobacterium</taxon>
        <taxon>Halobacterium salinarum NRC-34001</taxon>
    </lineage>
</organism>
<proteinExistence type="inferred from homology"/>
<reference key="1">
    <citation type="journal article" date="2000" name="Proc. Natl. Acad. Sci. U.S.A.">
        <title>Genome sequence of Halobacterium species NRC-1.</title>
        <authorList>
            <person name="Ng W.V."/>
            <person name="Kennedy S.P."/>
            <person name="Mahairas G.G."/>
            <person name="Berquist B."/>
            <person name="Pan M."/>
            <person name="Shukla H.D."/>
            <person name="Lasky S.R."/>
            <person name="Baliga N.S."/>
            <person name="Thorsson V."/>
            <person name="Sbrogna J."/>
            <person name="Swartzell S."/>
            <person name="Weir D."/>
            <person name="Hall J."/>
            <person name="Dahl T.A."/>
            <person name="Welti R."/>
            <person name="Goo Y.A."/>
            <person name="Leithauser B."/>
            <person name="Keller K."/>
            <person name="Cruz R."/>
            <person name="Danson M.J."/>
            <person name="Hough D.W."/>
            <person name="Maddocks D.G."/>
            <person name="Jablonski P.E."/>
            <person name="Krebs M.P."/>
            <person name="Angevine C.M."/>
            <person name="Dale H."/>
            <person name="Isenbarger T.A."/>
            <person name="Peck R.F."/>
            <person name="Pohlschroder M."/>
            <person name="Spudich J.L."/>
            <person name="Jung K.-H."/>
            <person name="Alam M."/>
            <person name="Freitas T."/>
            <person name="Hou S."/>
            <person name="Daniels C.J."/>
            <person name="Dennis P.P."/>
            <person name="Omer A.D."/>
            <person name="Ebhardt H."/>
            <person name="Lowe T.M."/>
            <person name="Liang P."/>
            <person name="Riley M."/>
            <person name="Hood L."/>
            <person name="DasSarma S."/>
        </authorList>
    </citation>
    <scope>NUCLEOTIDE SEQUENCE [LARGE SCALE GENOMIC DNA]</scope>
    <source>
        <strain>ATCC 700922 / JCM 11081 / NRC-1</strain>
    </source>
</reference>
<gene>
    <name type="primary">guaAB</name>
    <name type="ordered locus">VNG_1829G</name>
</gene>